<proteinExistence type="evidence at transcript level"/>
<organism>
    <name type="scientific">Mesocricetus auratus</name>
    <name type="common">Golden hamster</name>
    <dbReference type="NCBI Taxonomy" id="10036"/>
    <lineage>
        <taxon>Eukaryota</taxon>
        <taxon>Metazoa</taxon>
        <taxon>Chordata</taxon>
        <taxon>Craniata</taxon>
        <taxon>Vertebrata</taxon>
        <taxon>Euteleostomi</taxon>
        <taxon>Mammalia</taxon>
        <taxon>Eutheria</taxon>
        <taxon>Euarchontoglires</taxon>
        <taxon>Glires</taxon>
        <taxon>Rodentia</taxon>
        <taxon>Myomorpha</taxon>
        <taxon>Muroidea</taxon>
        <taxon>Cricetidae</taxon>
        <taxon>Cricetinae</taxon>
        <taxon>Mesocricetus</taxon>
    </lineage>
</organism>
<keyword id="KW-1003">Cell membrane</keyword>
<keyword id="KW-1015">Disulfide bond</keyword>
<keyword id="KW-0297">G-protein coupled receptor</keyword>
<keyword id="KW-0325">Glycoprotein</keyword>
<keyword id="KW-0433">Leucine-rich repeat</keyword>
<keyword id="KW-0472">Membrane</keyword>
<keyword id="KW-0675">Receptor</keyword>
<keyword id="KW-1185">Reference proteome</keyword>
<keyword id="KW-0677">Repeat</keyword>
<keyword id="KW-0732">Signal</keyword>
<keyword id="KW-0807">Transducer</keyword>
<keyword id="KW-0812">Transmembrane</keyword>
<keyword id="KW-1133">Transmembrane helix</keyword>
<protein>
    <recommendedName>
        <fullName>Follicle-stimulating hormone receptor</fullName>
        <shortName>FSH-R</shortName>
    </recommendedName>
    <alternativeName>
        <fullName>Follitropin receptor</fullName>
    </alternativeName>
</protein>
<accession>Q6R6L8</accession>
<evidence type="ECO:0000250" key="1"/>
<evidence type="ECO:0000250" key="2">
    <source>
        <dbReference type="UniProtKB" id="P20395"/>
    </source>
</evidence>
<evidence type="ECO:0000250" key="3">
    <source>
        <dbReference type="UniProtKB" id="P23945"/>
    </source>
</evidence>
<evidence type="ECO:0000255" key="4"/>
<evidence type="ECO:0000255" key="5">
    <source>
        <dbReference type="PROSITE-ProRule" id="PRU00521"/>
    </source>
</evidence>
<dbReference type="EMBL" id="AY509907">
    <property type="protein sequence ID" value="AAR98576.1"/>
    <property type="molecule type" value="mRNA"/>
</dbReference>
<dbReference type="RefSeq" id="NP_001268494.1">
    <property type="nucleotide sequence ID" value="NM_001281565.1"/>
</dbReference>
<dbReference type="SMR" id="Q6R6L8"/>
<dbReference type="STRING" id="10036.ENSMAUP00000004204"/>
<dbReference type="GlyCosmos" id="Q6R6L8">
    <property type="glycosylation" value="4 sites, No reported glycans"/>
</dbReference>
<dbReference type="GeneID" id="101835340"/>
<dbReference type="KEGG" id="maua:101835340"/>
<dbReference type="CTD" id="2492"/>
<dbReference type="eggNOG" id="KOG2087">
    <property type="taxonomic scope" value="Eukaryota"/>
</dbReference>
<dbReference type="OrthoDB" id="5981530at2759"/>
<dbReference type="Proteomes" id="UP000189706">
    <property type="component" value="Unplaced"/>
</dbReference>
<dbReference type="GO" id="GO:0016020">
    <property type="term" value="C:membrane"/>
    <property type="evidence" value="ECO:0000250"/>
    <property type="project" value="UniProtKB"/>
</dbReference>
<dbReference type="GO" id="GO:0005886">
    <property type="term" value="C:plasma membrane"/>
    <property type="evidence" value="ECO:0000250"/>
    <property type="project" value="UniProtKB"/>
</dbReference>
<dbReference type="GO" id="GO:0043235">
    <property type="term" value="C:receptor complex"/>
    <property type="evidence" value="ECO:0000250"/>
    <property type="project" value="UniProtKB"/>
</dbReference>
<dbReference type="GO" id="GO:0004963">
    <property type="term" value="F:follicle-stimulating hormone receptor activity"/>
    <property type="evidence" value="ECO:0000250"/>
    <property type="project" value="UniProtKB"/>
</dbReference>
<dbReference type="GO" id="GO:0008528">
    <property type="term" value="F:G protein-coupled peptide receptor activity"/>
    <property type="evidence" value="ECO:0007669"/>
    <property type="project" value="TreeGrafter"/>
</dbReference>
<dbReference type="GO" id="GO:0007189">
    <property type="term" value="P:adenylate cyclase-activating G protein-coupled receptor signaling pathway"/>
    <property type="evidence" value="ECO:0007669"/>
    <property type="project" value="TreeGrafter"/>
</dbReference>
<dbReference type="GO" id="GO:0071372">
    <property type="term" value="P:cellular response to follicle-stimulating hormone stimulus"/>
    <property type="evidence" value="ECO:0000250"/>
    <property type="project" value="UniProtKB"/>
</dbReference>
<dbReference type="GO" id="GO:0042699">
    <property type="term" value="P:follicle-stimulating hormone signaling pathway"/>
    <property type="evidence" value="ECO:0000250"/>
    <property type="project" value="UniProtKB"/>
</dbReference>
<dbReference type="GO" id="GO:0007186">
    <property type="term" value="P:G protein-coupled receptor signaling pathway"/>
    <property type="evidence" value="ECO:0000250"/>
    <property type="project" value="UniProtKB"/>
</dbReference>
<dbReference type="GO" id="GO:0009755">
    <property type="term" value="P:hormone-mediated signaling pathway"/>
    <property type="evidence" value="ECO:0007669"/>
    <property type="project" value="TreeGrafter"/>
</dbReference>
<dbReference type="GO" id="GO:0008584">
    <property type="term" value="P:male gonad development"/>
    <property type="evidence" value="ECO:0007669"/>
    <property type="project" value="TreeGrafter"/>
</dbReference>
<dbReference type="GO" id="GO:0070374">
    <property type="term" value="P:positive regulation of ERK1 and ERK2 cascade"/>
    <property type="evidence" value="ECO:0000250"/>
    <property type="project" value="UniProtKB"/>
</dbReference>
<dbReference type="GO" id="GO:0051897">
    <property type="term" value="P:positive regulation of phosphatidylinositol 3-kinase/protein kinase B signal transduction"/>
    <property type="evidence" value="ECO:0000250"/>
    <property type="project" value="UniProtKB"/>
</dbReference>
<dbReference type="GO" id="GO:0010738">
    <property type="term" value="P:regulation of protein kinase A signaling"/>
    <property type="evidence" value="ECO:0000250"/>
    <property type="project" value="UniProtKB"/>
</dbReference>
<dbReference type="FunFam" id="1.20.1070.10:FF:000019">
    <property type="entry name" value="Lutropin-choriogonadotropic hormone receptor"/>
    <property type="match status" value="1"/>
</dbReference>
<dbReference type="Gene3D" id="1.20.1070.10">
    <property type="entry name" value="Rhodopsin 7-helix transmembrane proteins"/>
    <property type="match status" value="1"/>
</dbReference>
<dbReference type="Gene3D" id="3.80.10.10">
    <property type="entry name" value="Ribonuclease Inhibitor"/>
    <property type="match status" value="1"/>
</dbReference>
<dbReference type="InterPro" id="IPR002272">
    <property type="entry name" value="FSH_rcpt"/>
</dbReference>
<dbReference type="InterPro" id="IPR024635">
    <property type="entry name" value="GnHR_TM"/>
</dbReference>
<dbReference type="InterPro" id="IPR000276">
    <property type="entry name" value="GPCR_Rhodpsn"/>
</dbReference>
<dbReference type="InterPro" id="IPR017452">
    <property type="entry name" value="GPCR_Rhodpsn_7TM"/>
</dbReference>
<dbReference type="InterPro" id="IPR002131">
    <property type="entry name" value="Gphrmn_rcpt_fam"/>
</dbReference>
<dbReference type="InterPro" id="IPR001611">
    <property type="entry name" value="Leu-rich_rpt"/>
</dbReference>
<dbReference type="InterPro" id="IPR026906">
    <property type="entry name" value="LRR_5"/>
</dbReference>
<dbReference type="InterPro" id="IPR032675">
    <property type="entry name" value="LRR_dom_sf"/>
</dbReference>
<dbReference type="InterPro" id="IPR000372">
    <property type="entry name" value="LRRNT"/>
</dbReference>
<dbReference type="PANTHER" id="PTHR24372:SF5">
    <property type="entry name" value="FOLLICLE-STIMULATING HORMONE RECEPTOR"/>
    <property type="match status" value="1"/>
</dbReference>
<dbReference type="PANTHER" id="PTHR24372">
    <property type="entry name" value="GLYCOPROTEIN HORMONE RECEPTOR"/>
    <property type="match status" value="1"/>
</dbReference>
<dbReference type="Pfam" id="PF00001">
    <property type="entry name" value="7tm_1"/>
    <property type="match status" value="1"/>
</dbReference>
<dbReference type="Pfam" id="PF12369">
    <property type="entry name" value="GnHR_trans"/>
    <property type="match status" value="1"/>
</dbReference>
<dbReference type="Pfam" id="PF13306">
    <property type="entry name" value="LRR_5"/>
    <property type="match status" value="1"/>
</dbReference>
<dbReference type="Pfam" id="PF13855">
    <property type="entry name" value="LRR_8"/>
    <property type="match status" value="1"/>
</dbReference>
<dbReference type="Pfam" id="PF01462">
    <property type="entry name" value="LRRNT"/>
    <property type="match status" value="1"/>
</dbReference>
<dbReference type="PRINTS" id="PR01143">
    <property type="entry name" value="FSHRECEPTOR"/>
</dbReference>
<dbReference type="PRINTS" id="PR00373">
    <property type="entry name" value="GLYCHORMONER"/>
</dbReference>
<dbReference type="PRINTS" id="PR00237">
    <property type="entry name" value="GPCRRHODOPSN"/>
</dbReference>
<dbReference type="SMART" id="SM00013">
    <property type="entry name" value="LRRNT"/>
    <property type="match status" value="1"/>
</dbReference>
<dbReference type="SUPFAM" id="SSF81321">
    <property type="entry name" value="Family A G protein-coupled receptor-like"/>
    <property type="match status" value="1"/>
</dbReference>
<dbReference type="SUPFAM" id="SSF52058">
    <property type="entry name" value="L domain-like"/>
    <property type="match status" value="1"/>
</dbReference>
<dbReference type="PROSITE" id="PS50262">
    <property type="entry name" value="G_PROTEIN_RECEP_F1_2"/>
    <property type="match status" value="1"/>
</dbReference>
<sequence>MALLLVSLLAFLGSGAGCHHWLCHCSDRVFLCQDSKVTEIPPDLPRNAIELRFVLTKLRVIPQGSFSGFKDLEKIEISQNDVLEVIEADVFSNLPKLHEIRIERANTLLYINPEAFQNLPNLRYLLISNTGIKHLPVVHKIQSLQKVLLDIQDNINLHTIARNSFMGLSFDSLILWLNKNGIQEIHNCAFNGTQLDELNLSDNNNLEELPNDVFRGASGPVILDISRTKVHSLPSHGLENLKKLRARSTYSLKKLPSLDKFVTLVEASLTYPSHCCAFANWRRQISELHPLCNKSVLRQDIDYVTQARDQNTSLIDDDLSYGKETDMMYSEFDYDLCNEVIDVTCSPKPDAFNPCEDIMGYNILRVLIWFISILAITGNITVLVILTTSQYKLTVPRFLMCNLAFADLCIGIYLLPIASVDIHTKSQYHNYAIDWQTAVGCDAAGFFTAFASELSVYTLTAIPLERWHTITHAMQLERKVQLRHAASVMVMGWVFAFAAALLPIFGVSSYMKVSICLPIDIDSPLSQLYVMALLVLNVLAFVVICGCYTHIYLTVRNPNIVSSSSDTKIAKRMATLIFTDFLCMAPISLFAISASLKAPLITVSKAKILLVLFYPINSCANPFLYAIFTKNFRRDFFILMGKFGCYEMQAQIYRTETSSTAHNFHSRKGHCPSAPRVTNSSSYMLVPLSQSAHN</sequence>
<name>FSHR_MESAU</name>
<gene>
    <name type="primary">FSHR</name>
</gene>
<feature type="signal peptide" evidence="4">
    <location>
        <begin position="1"/>
        <end position="17"/>
    </location>
</feature>
<feature type="chain" id="PRO_0000233344" description="Follicle-stimulating hormone receptor">
    <location>
        <begin position="18"/>
        <end position="694"/>
    </location>
</feature>
<feature type="topological domain" description="Extracellular" evidence="4">
    <location>
        <begin position="18"/>
        <end position="365"/>
    </location>
</feature>
<feature type="transmembrane region" description="Helical; Name=1" evidence="4">
    <location>
        <begin position="366"/>
        <end position="386"/>
    </location>
</feature>
<feature type="topological domain" description="Cytoplasmic" evidence="4">
    <location>
        <begin position="387"/>
        <end position="397"/>
    </location>
</feature>
<feature type="transmembrane region" description="Helical; Name=2" evidence="4">
    <location>
        <begin position="398"/>
        <end position="420"/>
    </location>
</feature>
<feature type="topological domain" description="Extracellular" evidence="4">
    <location>
        <begin position="421"/>
        <end position="442"/>
    </location>
</feature>
<feature type="transmembrane region" description="Helical; Name=3" evidence="4">
    <location>
        <begin position="443"/>
        <end position="464"/>
    </location>
</feature>
<feature type="topological domain" description="Cytoplasmic" evidence="4">
    <location>
        <begin position="465"/>
        <end position="484"/>
    </location>
</feature>
<feature type="transmembrane region" description="Helical; Name=4" evidence="4">
    <location>
        <begin position="485"/>
        <end position="507"/>
    </location>
</feature>
<feature type="topological domain" description="Extracellular" evidence="4">
    <location>
        <begin position="508"/>
        <end position="527"/>
    </location>
</feature>
<feature type="transmembrane region" description="Helical; Name=5" evidence="4">
    <location>
        <begin position="528"/>
        <end position="549"/>
    </location>
</feature>
<feature type="topological domain" description="Cytoplasmic" evidence="4">
    <location>
        <begin position="550"/>
        <end position="572"/>
    </location>
</feature>
<feature type="transmembrane region" description="Helical; Name=6" evidence="4">
    <location>
        <begin position="573"/>
        <end position="596"/>
    </location>
</feature>
<feature type="topological domain" description="Extracellular" evidence="4">
    <location>
        <begin position="597"/>
        <end position="607"/>
    </location>
</feature>
<feature type="transmembrane region" description="Helical; Name=7" evidence="4">
    <location>
        <begin position="608"/>
        <end position="629"/>
    </location>
</feature>
<feature type="topological domain" description="Cytoplasmic" evidence="4">
    <location>
        <begin position="630"/>
        <end position="694"/>
    </location>
</feature>
<feature type="domain" description="LRRNT">
    <location>
        <begin position="18"/>
        <end position="46"/>
    </location>
</feature>
<feature type="repeat" description="LRR 1">
    <location>
        <begin position="49"/>
        <end position="72"/>
    </location>
</feature>
<feature type="repeat" description="LRR 2">
    <location>
        <begin position="73"/>
        <end position="97"/>
    </location>
</feature>
<feature type="repeat" description="LRR 3">
    <location>
        <begin position="98"/>
        <end position="118"/>
    </location>
</feature>
<feature type="repeat" description="LRR 4">
    <location>
        <begin position="119"/>
        <end position="143"/>
    </location>
</feature>
<feature type="repeat" description="LRR 5">
    <location>
        <begin position="144"/>
        <end position="169"/>
    </location>
</feature>
<feature type="repeat" description="LRR 6">
    <location>
        <begin position="170"/>
        <end position="192"/>
    </location>
</feature>
<feature type="repeat" description="LRR 7">
    <location>
        <begin position="193"/>
        <end position="216"/>
    </location>
</feature>
<feature type="repeat" description="LRR 8">
    <location>
        <begin position="217"/>
        <end position="240"/>
    </location>
</feature>
<feature type="repeat" description="LRR 9">
    <location>
        <begin position="241"/>
        <end position="259"/>
    </location>
</feature>
<feature type="glycosylation site" description="N-linked (GlcNAc...) asparagine" evidence="4">
    <location>
        <position position="191"/>
    </location>
</feature>
<feature type="glycosylation site" description="N-linked (GlcNAc...) asparagine" evidence="4">
    <location>
        <position position="199"/>
    </location>
</feature>
<feature type="glycosylation site" description="N-linked (GlcNAc...) asparagine" evidence="4">
    <location>
        <position position="293"/>
    </location>
</feature>
<feature type="glycosylation site" description="N-linked (GlcNAc...) asparagine" evidence="4">
    <location>
        <position position="311"/>
    </location>
</feature>
<feature type="disulfide bond" evidence="5">
    <location>
        <begin position="18"/>
        <end position="25"/>
    </location>
</feature>
<feature type="disulfide bond" evidence="5">
    <location>
        <begin position="23"/>
        <end position="32"/>
    </location>
</feature>
<feature type="disulfide bond" evidence="3">
    <location>
        <begin position="275"/>
        <end position="345"/>
    </location>
</feature>
<feature type="disulfide bond" evidence="3">
    <location>
        <begin position="276"/>
        <end position="355"/>
    </location>
</feature>
<feature type="disulfide bond" evidence="3">
    <location>
        <begin position="276"/>
        <end position="292"/>
    </location>
</feature>
<feature type="disulfide bond" evidence="3">
    <location>
        <begin position="292"/>
        <end position="337"/>
    </location>
</feature>
<feature type="disulfide bond" evidence="5">
    <location>
        <begin position="441"/>
        <end position="516"/>
    </location>
</feature>
<comment type="function">
    <text evidence="3">G protein-coupled receptor for follitropin, the follicle-stimulating hormone. Through cAMP production activates the downstream PI3K-AKT and ERK1/ERK2 signaling pathways.</text>
</comment>
<comment type="subunit">
    <text evidence="2 3">Homotrimer. Functions as a homotrimer binding the FSH hormone heterodimer composed of CGA and FSHB (By similarity). Interacts with ARRB2 (By similarity). Interacts with APPL2; interaction is independent of follicle stimulating hormone stimulation (By similarity).</text>
</comment>
<comment type="subcellular location">
    <subcellularLocation>
        <location>Cell membrane</location>
        <topology>Multi-pass membrane protein</topology>
    </subcellularLocation>
</comment>
<comment type="PTM">
    <text evidence="1">N-glycosylated; indirectly required for FSH-binding, possibly via a conformational change that allows high affinity binding of hormone.</text>
</comment>
<comment type="similarity">
    <text evidence="5">Belongs to the G-protein coupled receptor 1 family. FSH/LSH/TSH subfamily.</text>
</comment>
<reference key="1">
    <citation type="journal article" date="2004" name="Biol. Reprod.">
        <title>Downregulation of follicle-stimulating hormone (FSH)-receptor messenger RNA levels in the hamster ovary: effect of the endogenous and exogenous FSH.</title>
        <authorList>
            <person name="Zhang Y.M."/>
            <person name="Roy S.K."/>
        </authorList>
    </citation>
    <scope>NUCLEOTIDE SEQUENCE [MRNA]</scope>
</reference>